<evidence type="ECO:0000255" key="1">
    <source>
        <dbReference type="HAMAP-Rule" id="MF_00141"/>
    </source>
</evidence>
<organism>
    <name type="scientific">Acidothermus cellulolyticus (strain ATCC 43068 / DSM 8971 / 11B)</name>
    <dbReference type="NCBI Taxonomy" id="351607"/>
    <lineage>
        <taxon>Bacteria</taxon>
        <taxon>Bacillati</taxon>
        <taxon>Actinomycetota</taxon>
        <taxon>Actinomycetes</taxon>
        <taxon>Acidothermales</taxon>
        <taxon>Acidothermaceae</taxon>
        <taxon>Acidothermus</taxon>
    </lineage>
</organism>
<gene>
    <name evidence="1" type="primary">efp</name>
    <name type="ordered locus">Acel_1305</name>
</gene>
<proteinExistence type="inferred from homology"/>
<comment type="function">
    <text evidence="1">Involved in peptide bond synthesis. Stimulates efficient translation and peptide-bond synthesis on native or reconstituted 70S ribosomes in vitro. Probably functions indirectly by altering the affinity of the ribosome for aminoacyl-tRNA, thus increasing their reactivity as acceptors for peptidyl transferase.</text>
</comment>
<comment type="pathway">
    <text evidence="1">Protein biosynthesis; polypeptide chain elongation.</text>
</comment>
<comment type="subcellular location">
    <subcellularLocation>
        <location evidence="1">Cytoplasm</location>
    </subcellularLocation>
</comment>
<comment type="similarity">
    <text evidence="1">Belongs to the elongation factor P family.</text>
</comment>
<keyword id="KW-0963">Cytoplasm</keyword>
<keyword id="KW-0251">Elongation factor</keyword>
<keyword id="KW-0648">Protein biosynthesis</keyword>
<keyword id="KW-1185">Reference proteome</keyword>
<feature type="chain" id="PRO_1000010667" description="Elongation factor P">
    <location>
        <begin position="1"/>
        <end position="187"/>
    </location>
</feature>
<name>EFP_ACIC1</name>
<accession>A0LUG7</accession>
<sequence>MATTNDLKNGMTLDLDGELWNVVEFQHVKPGKGPAFVRTKLKHVLTGKVVDKTFNAGVKVDVATVDKRTMQYLYREGDSFVFMDTETYDQYHIPAQTVGDAANFLLENAEAVVALHEGTPLYVELPAAVELTITYTEPGVQGDRSTGGTKPATLETGAQIQVPLFITTGEKVKVDTRTGEYLGRANS</sequence>
<protein>
    <recommendedName>
        <fullName evidence="1">Elongation factor P</fullName>
        <shortName evidence="1">EF-P</shortName>
    </recommendedName>
</protein>
<dbReference type="EMBL" id="CP000481">
    <property type="protein sequence ID" value="ABK53077.1"/>
    <property type="molecule type" value="Genomic_DNA"/>
</dbReference>
<dbReference type="RefSeq" id="WP_011720140.1">
    <property type="nucleotide sequence ID" value="NC_008578.1"/>
</dbReference>
<dbReference type="SMR" id="A0LUG7"/>
<dbReference type="FunCoup" id="A0LUG7">
    <property type="interactions" value="232"/>
</dbReference>
<dbReference type="STRING" id="351607.Acel_1305"/>
<dbReference type="KEGG" id="ace:Acel_1305"/>
<dbReference type="eggNOG" id="COG0231">
    <property type="taxonomic scope" value="Bacteria"/>
</dbReference>
<dbReference type="HOGENOM" id="CLU_074944_0_1_11"/>
<dbReference type="InParanoid" id="A0LUG7"/>
<dbReference type="OrthoDB" id="9801844at2"/>
<dbReference type="UniPathway" id="UPA00345"/>
<dbReference type="Proteomes" id="UP000008221">
    <property type="component" value="Chromosome"/>
</dbReference>
<dbReference type="GO" id="GO:0005737">
    <property type="term" value="C:cytoplasm"/>
    <property type="evidence" value="ECO:0007669"/>
    <property type="project" value="UniProtKB-SubCell"/>
</dbReference>
<dbReference type="GO" id="GO:0003746">
    <property type="term" value="F:translation elongation factor activity"/>
    <property type="evidence" value="ECO:0007669"/>
    <property type="project" value="UniProtKB-UniRule"/>
</dbReference>
<dbReference type="GO" id="GO:0043043">
    <property type="term" value="P:peptide biosynthetic process"/>
    <property type="evidence" value="ECO:0007669"/>
    <property type="project" value="InterPro"/>
</dbReference>
<dbReference type="CDD" id="cd04470">
    <property type="entry name" value="S1_EF-P_repeat_1"/>
    <property type="match status" value="1"/>
</dbReference>
<dbReference type="CDD" id="cd05794">
    <property type="entry name" value="S1_EF-P_repeat_2"/>
    <property type="match status" value="1"/>
</dbReference>
<dbReference type="FunFam" id="2.30.30.30:FF:000003">
    <property type="entry name" value="Elongation factor P"/>
    <property type="match status" value="1"/>
</dbReference>
<dbReference type="FunFam" id="2.40.50.140:FF:000004">
    <property type="entry name" value="Elongation factor P"/>
    <property type="match status" value="1"/>
</dbReference>
<dbReference type="FunFam" id="2.40.50.140:FF:000009">
    <property type="entry name" value="Elongation factor P"/>
    <property type="match status" value="1"/>
</dbReference>
<dbReference type="Gene3D" id="2.30.30.30">
    <property type="match status" value="1"/>
</dbReference>
<dbReference type="Gene3D" id="2.40.50.140">
    <property type="entry name" value="Nucleic acid-binding proteins"/>
    <property type="match status" value="2"/>
</dbReference>
<dbReference type="HAMAP" id="MF_00141">
    <property type="entry name" value="EF_P"/>
    <property type="match status" value="1"/>
</dbReference>
<dbReference type="InterPro" id="IPR015365">
    <property type="entry name" value="Elong-fact-P_C"/>
</dbReference>
<dbReference type="InterPro" id="IPR012340">
    <property type="entry name" value="NA-bd_OB-fold"/>
</dbReference>
<dbReference type="InterPro" id="IPR014722">
    <property type="entry name" value="Rib_uL2_dom2"/>
</dbReference>
<dbReference type="InterPro" id="IPR020599">
    <property type="entry name" value="Transl_elong_fac_P/YeiP"/>
</dbReference>
<dbReference type="InterPro" id="IPR013185">
    <property type="entry name" value="Transl_elong_KOW-like"/>
</dbReference>
<dbReference type="InterPro" id="IPR001059">
    <property type="entry name" value="Transl_elong_P/YeiP_cen"/>
</dbReference>
<dbReference type="InterPro" id="IPR013852">
    <property type="entry name" value="Transl_elong_P/YeiP_CS"/>
</dbReference>
<dbReference type="InterPro" id="IPR011768">
    <property type="entry name" value="Transl_elongation_fac_P"/>
</dbReference>
<dbReference type="InterPro" id="IPR008991">
    <property type="entry name" value="Translation_prot_SH3-like_sf"/>
</dbReference>
<dbReference type="NCBIfam" id="TIGR00038">
    <property type="entry name" value="efp"/>
    <property type="match status" value="1"/>
</dbReference>
<dbReference type="NCBIfam" id="NF001810">
    <property type="entry name" value="PRK00529.1"/>
    <property type="match status" value="1"/>
</dbReference>
<dbReference type="PANTHER" id="PTHR30053">
    <property type="entry name" value="ELONGATION FACTOR P"/>
    <property type="match status" value="1"/>
</dbReference>
<dbReference type="PANTHER" id="PTHR30053:SF12">
    <property type="entry name" value="ELONGATION FACTOR P (EF-P) FAMILY PROTEIN"/>
    <property type="match status" value="1"/>
</dbReference>
<dbReference type="Pfam" id="PF01132">
    <property type="entry name" value="EFP"/>
    <property type="match status" value="1"/>
</dbReference>
<dbReference type="Pfam" id="PF08207">
    <property type="entry name" value="EFP_N"/>
    <property type="match status" value="1"/>
</dbReference>
<dbReference type="Pfam" id="PF09285">
    <property type="entry name" value="Elong-fact-P_C"/>
    <property type="match status" value="1"/>
</dbReference>
<dbReference type="PIRSF" id="PIRSF005901">
    <property type="entry name" value="EF-P"/>
    <property type="match status" value="1"/>
</dbReference>
<dbReference type="SMART" id="SM01185">
    <property type="entry name" value="EFP"/>
    <property type="match status" value="1"/>
</dbReference>
<dbReference type="SMART" id="SM00841">
    <property type="entry name" value="Elong-fact-P_C"/>
    <property type="match status" value="1"/>
</dbReference>
<dbReference type="SUPFAM" id="SSF50249">
    <property type="entry name" value="Nucleic acid-binding proteins"/>
    <property type="match status" value="2"/>
</dbReference>
<dbReference type="SUPFAM" id="SSF50104">
    <property type="entry name" value="Translation proteins SH3-like domain"/>
    <property type="match status" value="1"/>
</dbReference>
<dbReference type="PROSITE" id="PS01275">
    <property type="entry name" value="EFP"/>
    <property type="match status" value="1"/>
</dbReference>
<reference key="1">
    <citation type="journal article" date="2009" name="Genome Res.">
        <title>Complete genome of the cellulolytic thermophile Acidothermus cellulolyticus 11B provides insights into its ecophysiological and evolutionary adaptations.</title>
        <authorList>
            <person name="Barabote R.D."/>
            <person name="Xie G."/>
            <person name="Leu D.H."/>
            <person name="Normand P."/>
            <person name="Necsulea A."/>
            <person name="Daubin V."/>
            <person name="Medigue C."/>
            <person name="Adney W.S."/>
            <person name="Xu X.C."/>
            <person name="Lapidus A."/>
            <person name="Parales R.E."/>
            <person name="Detter C."/>
            <person name="Pujic P."/>
            <person name="Bruce D."/>
            <person name="Lavire C."/>
            <person name="Challacombe J.F."/>
            <person name="Brettin T.S."/>
            <person name="Berry A.M."/>
        </authorList>
    </citation>
    <scope>NUCLEOTIDE SEQUENCE [LARGE SCALE GENOMIC DNA]</scope>
    <source>
        <strain>ATCC 43068 / DSM 8971 / 11B</strain>
    </source>
</reference>